<proteinExistence type="evidence at protein level"/>
<reference key="1">
    <citation type="journal article" date="2005" name="PLoS Biol.">
        <title>The genome sequence of Rickettsia felis identifies the first putative conjugative plasmid in an obligate intracellular parasite.</title>
        <authorList>
            <person name="Ogata H."/>
            <person name="Renesto P."/>
            <person name="Audic S."/>
            <person name="Robert C."/>
            <person name="Blanc G."/>
            <person name="Fournier P.-E."/>
            <person name="Parinello H."/>
            <person name="Claverie J.-M."/>
            <person name="Raoult D."/>
        </authorList>
    </citation>
    <scope>NUCLEOTIDE SEQUENCE [LARGE SCALE GENOMIC DNA]</scope>
    <source>
        <strain>ATCC VR-1525 / URRWXCal2</strain>
    </source>
</reference>
<reference key="2">
    <citation type="journal article" date="2011" name="PLoS ONE">
        <title>Effect of rickettsial toxin VapC on its eukaryotic host.</title>
        <authorList>
            <person name="Audoly G."/>
            <person name="Vincentelli R."/>
            <person name="Edouard S."/>
            <person name="Georgiades K."/>
            <person name="Mediannikov O."/>
            <person name="Gimenez G."/>
            <person name="Socolovschi C."/>
            <person name="Mege J.L."/>
            <person name="Cambillau C."/>
            <person name="Raoult D."/>
        </authorList>
    </citation>
    <scope>FUNCTION AS AN ANTITOXIN</scope>
    <scope>EXPRESSION IN E.COLI OR S.CEREVISIAE</scope>
    <source>
        <strain>ATCC VR-1525 / URRWXCal2</strain>
    </source>
</reference>
<reference key="3">
    <citation type="journal article" date="2012" name="Nucleic Acids Res.">
        <title>Crystal structure of the DNA-bound VapBC2 antitoxin/toxin pair from Rickettsia felis.</title>
        <authorList>
            <person name="Mate M.J."/>
            <person name="Vincentelli R."/>
            <person name="Foos N."/>
            <person name="Raoult D."/>
            <person name="Cambillau C."/>
            <person name="Ortiz-Lombardia M."/>
        </authorList>
    </citation>
    <scope>X-RAY CRYSTALLOGRAPHY (2.50 ANGSTROMS) IN COMPLEX WITH VAPC2 AND DNA</scope>
    <scope>SUBUNIT</scope>
    <scope>DNA-BINDING</scope>
</reference>
<evidence type="ECO:0000255" key="1">
    <source>
        <dbReference type="PROSITE-ProRule" id="PRU01076"/>
    </source>
</evidence>
<evidence type="ECO:0000269" key="2">
    <source>
    </source>
</evidence>
<evidence type="ECO:0000269" key="3">
    <source>
    </source>
</evidence>
<evidence type="ECO:0000305" key="4"/>
<evidence type="ECO:0007829" key="5">
    <source>
        <dbReference type="PDB" id="3ZVK"/>
    </source>
</evidence>
<organism>
    <name type="scientific">Rickettsia felis (strain ATCC VR-1525 / URRWXCal2)</name>
    <name type="common">Rickettsia azadi</name>
    <dbReference type="NCBI Taxonomy" id="315456"/>
    <lineage>
        <taxon>Bacteria</taxon>
        <taxon>Pseudomonadati</taxon>
        <taxon>Pseudomonadota</taxon>
        <taxon>Alphaproteobacteria</taxon>
        <taxon>Rickettsiales</taxon>
        <taxon>Rickettsiaceae</taxon>
        <taxon>Rickettsieae</taxon>
        <taxon>Rickettsia</taxon>
        <taxon>spotted fever group</taxon>
    </lineage>
</organism>
<feature type="chain" id="PRO_0000432240" description="Antitoxin VapB2">
    <location>
        <begin position="1"/>
        <end position="78"/>
    </location>
</feature>
<feature type="domain" description="SpoVT-AbrB" evidence="1">
    <location>
        <begin position="4"/>
        <end position="44"/>
    </location>
</feature>
<feature type="strand" evidence="5">
    <location>
        <begin position="3"/>
        <end position="9"/>
    </location>
</feature>
<feature type="strand" evidence="5">
    <location>
        <begin position="12"/>
        <end position="17"/>
    </location>
</feature>
<feature type="helix" evidence="5">
    <location>
        <begin position="19"/>
        <end position="21"/>
    </location>
</feature>
<feature type="strand" evidence="5">
    <location>
        <begin position="24"/>
        <end position="33"/>
    </location>
</feature>
<feature type="strand" evidence="5">
    <location>
        <begin position="36"/>
        <end position="41"/>
    </location>
</feature>
<feature type="helix" evidence="5">
    <location>
        <begin position="46"/>
        <end position="57"/>
    </location>
</feature>
<feature type="strand" evidence="5">
    <location>
        <begin position="61"/>
        <end position="64"/>
    </location>
</feature>
<protein>
    <recommendedName>
        <fullName>Antitoxin VapB2</fullName>
    </recommendedName>
</protein>
<name>VAPB2_RICFE</name>
<sequence>MNKAKIFMNGQSQAVRLPKEFRFSVKEVSVIPLGKGIVLQPLPNSWKDVFQEMAEISSDDIFPEGRKDLPPQKRKYFE</sequence>
<comment type="function">
    <text evidence="2">Antitoxin component of a type II toxin-antitoxin (TA) system. Upon expression in E.coli or S.cerevisiae neutralizes the effect of cognate toxin VapC2, partially inhibits the RNase activity of VapC2.</text>
</comment>
<comment type="subunit">
    <text evidence="3">Forms complexes with VapC2; probably VapC2(4):VapB2(2) in the absence of DNA, and VapC2(4):VapB2(4) in the presence of DNA. Crystallizes as heterodimers with stoichiometry VapC2(4):VapB2(4) in the presence of its probable promoter DNA. The heterodimers are in contact via alternative VapC-VapC and VapB-VapB interactions. This subunit contacts DNA.</text>
</comment>
<comment type="similarity">
    <text evidence="4">Belongs to the VapB family.</text>
</comment>
<keyword id="KW-0002">3D-structure</keyword>
<keyword id="KW-0238">DNA-binding</keyword>
<keyword id="KW-1277">Toxin-antitoxin system</keyword>
<accession>Q4UNB3</accession>
<dbReference type="EMBL" id="CP000053">
    <property type="protein sequence ID" value="AAY60945.1"/>
    <property type="molecule type" value="Genomic_DNA"/>
</dbReference>
<dbReference type="PDB" id="3ZVK">
    <property type="method" value="X-ray"/>
    <property type="resolution" value="2.50 A"/>
    <property type="chains" value="E/F/G/H=1-78"/>
</dbReference>
<dbReference type="PDBsum" id="3ZVK"/>
<dbReference type="SMR" id="Q4UNB3"/>
<dbReference type="STRING" id="315456.RF_0094"/>
<dbReference type="KEGG" id="rfe:RF_0094"/>
<dbReference type="eggNOG" id="COG4456">
    <property type="taxonomic scope" value="Bacteria"/>
</dbReference>
<dbReference type="HOGENOM" id="CLU_162018_2_2_5"/>
<dbReference type="OrthoDB" id="7173678at2"/>
<dbReference type="EvolutionaryTrace" id="Q4UNB3"/>
<dbReference type="Proteomes" id="UP000008548">
    <property type="component" value="Chromosome"/>
</dbReference>
<dbReference type="GO" id="GO:0003677">
    <property type="term" value="F:DNA binding"/>
    <property type="evidence" value="ECO:0007669"/>
    <property type="project" value="UniProtKB-KW"/>
</dbReference>
<dbReference type="Gene3D" id="2.10.260.10">
    <property type="match status" value="1"/>
</dbReference>
<dbReference type="InterPro" id="IPR047976">
    <property type="entry name" value="Anti_VapB2-like"/>
</dbReference>
<dbReference type="InterPro" id="IPR007159">
    <property type="entry name" value="SpoVT-AbrB_dom"/>
</dbReference>
<dbReference type="InterPro" id="IPR037914">
    <property type="entry name" value="SpoVT-AbrB_sf"/>
</dbReference>
<dbReference type="InterPro" id="IPR051734">
    <property type="entry name" value="VapB_TA_antitoxins"/>
</dbReference>
<dbReference type="NCBIfam" id="NF040493">
    <property type="entry name" value="TA_anti_VapB"/>
    <property type="match status" value="1"/>
</dbReference>
<dbReference type="PANTHER" id="PTHR37550">
    <property type="entry name" value="ANTITOXIN VAPB1"/>
    <property type="match status" value="1"/>
</dbReference>
<dbReference type="PANTHER" id="PTHR37550:SF3">
    <property type="entry name" value="ANTITOXIN VAPB1"/>
    <property type="match status" value="1"/>
</dbReference>
<dbReference type="Pfam" id="PF04014">
    <property type="entry name" value="MazE_antitoxin"/>
    <property type="match status" value="1"/>
</dbReference>
<dbReference type="SUPFAM" id="SSF89447">
    <property type="entry name" value="AbrB/MazE/MraZ-like"/>
    <property type="match status" value="1"/>
</dbReference>
<dbReference type="PROSITE" id="PS51740">
    <property type="entry name" value="SPOVT_ABRB"/>
    <property type="match status" value="1"/>
</dbReference>
<gene>
    <name type="primary">vapB2</name>
    <name type="ordered locus">RF_0094</name>
</gene>